<dbReference type="EMBL" id="CP000816">
    <property type="protein sequence ID" value="ABU82448.1"/>
    <property type="molecule type" value="Genomic_DNA"/>
</dbReference>
<dbReference type="STRING" id="453591.Igni_1272"/>
<dbReference type="KEGG" id="iho:Igni_1272"/>
<dbReference type="eggNOG" id="arCOG04477">
    <property type="taxonomic scope" value="Archaea"/>
</dbReference>
<dbReference type="HOGENOM" id="CLU_1607134_0_0_2"/>
<dbReference type="OrthoDB" id="24613at2157"/>
<dbReference type="Proteomes" id="UP000000262">
    <property type="component" value="Chromosome"/>
</dbReference>
<dbReference type="HAMAP" id="MF_00498">
    <property type="entry name" value="UPF0179"/>
    <property type="match status" value="1"/>
</dbReference>
<dbReference type="InterPro" id="IPR005369">
    <property type="entry name" value="UPF0179"/>
</dbReference>
<dbReference type="PANTHER" id="PTHR40699">
    <property type="entry name" value="UPF0179 PROTEIN MJ1627"/>
    <property type="match status" value="1"/>
</dbReference>
<dbReference type="PANTHER" id="PTHR40699:SF1">
    <property type="entry name" value="UPF0179 PROTEIN MJ1627"/>
    <property type="match status" value="1"/>
</dbReference>
<dbReference type="Pfam" id="PF03684">
    <property type="entry name" value="UPF0179"/>
    <property type="match status" value="1"/>
</dbReference>
<protein>
    <recommendedName>
        <fullName evidence="1">UPF0179 protein Igni_1272</fullName>
    </recommendedName>
</protein>
<proteinExistence type="inferred from homology"/>
<name>Y1272_IGNH4</name>
<feature type="chain" id="PRO_0000378115" description="UPF0179 protein Igni_1272">
    <location>
        <begin position="1"/>
        <end position="165"/>
    </location>
</feature>
<evidence type="ECO:0000255" key="1">
    <source>
        <dbReference type="HAMAP-Rule" id="MF_00498"/>
    </source>
</evidence>
<organism>
    <name type="scientific">Ignicoccus hospitalis (strain KIN4/I / DSM 18386 / JCM 14125)</name>
    <dbReference type="NCBI Taxonomy" id="453591"/>
    <lineage>
        <taxon>Archaea</taxon>
        <taxon>Thermoproteota</taxon>
        <taxon>Thermoprotei</taxon>
        <taxon>Desulfurococcales</taxon>
        <taxon>Desulfurococcaceae</taxon>
        <taxon>Ignicoccus</taxon>
    </lineage>
</organism>
<gene>
    <name type="ordered locus">Igni_1272</name>
</gene>
<sequence length="165" mass="18515">MKKVLPVPKEFKPGDRFVAVGTLPLCEGCMLKERCEEYKRGWIYEVKGKVGLVEHDCKVHGKVVMGEVEEVGIPLILPKRLAIEGATVEYTPSKCTNKKCPHWRDCTAPWGERVKVKVREVLEEVQCPLGLPLVRVIGVPVEVKRRTRRNIKKGKGGHGKRGLAP</sequence>
<accession>A8ABZ6</accession>
<reference key="1">
    <citation type="journal article" date="2008" name="Genome Biol.">
        <title>A genomic analysis of the archaeal system Ignicoccus hospitalis-Nanoarchaeum equitans.</title>
        <authorList>
            <person name="Podar M."/>
            <person name="Anderson I."/>
            <person name="Makarova K.S."/>
            <person name="Elkins J.G."/>
            <person name="Ivanova N."/>
            <person name="Wall M.A."/>
            <person name="Lykidis A."/>
            <person name="Mavromatis K."/>
            <person name="Sun H."/>
            <person name="Hudson M.E."/>
            <person name="Chen W."/>
            <person name="Deciu C."/>
            <person name="Hutchison D."/>
            <person name="Eads J.R."/>
            <person name="Anderson A."/>
            <person name="Fernandes F."/>
            <person name="Szeto E."/>
            <person name="Lapidus A."/>
            <person name="Kyrpides N.C."/>
            <person name="Saier M.H. Jr."/>
            <person name="Richardson P.M."/>
            <person name="Rachel R."/>
            <person name="Huber H."/>
            <person name="Eisen J.A."/>
            <person name="Koonin E.V."/>
            <person name="Keller M."/>
            <person name="Stetter K.O."/>
        </authorList>
    </citation>
    <scope>NUCLEOTIDE SEQUENCE [LARGE SCALE GENOMIC DNA]</scope>
    <source>
        <strain>KIN4/I / DSM 18386 / JCM 14125</strain>
    </source>
</reference>
<comment type="similarity">
    <text evidence="1">Belongs to the UPF0179 family.</text>
</comment>
<keyword id="KW-1185">Reference proteome</keyword>